<feature type="transit peptide" description="Mitochondrion" evidence="2">
    <location>
        <begin position="1"/>
        <end position="53"/>
    </location>
</feature>
<feature type="chain" id="PRO_0000007214" description="Glutamate dehydrogenase, mitochondrial">
    <location>
        <begin position="54"/>
        <end position="562"/>
    </location>
</feature>
<feature type="active site" evidence="3">
    <location>
        <position position="174"/>
    </location>
</feature>
<feature type="binding site" evidence="1">
    <location>
        <begin position="132"/>
        <end position="134"/>
    </location>
    <ligand>
        <name>NAD(+)</name>
        <dbReference type="ChEBI" id="CHEBI:57540"/>
    </ligand>
</feature>
<feature type="binding site" evidence="1">
    <location>
        <position position="138"/>
    </location>
    <ligand>
        <name>substrate</name>
    </ligand>
</feature>
<feature type="binding site" evidence="1">
    <location>
        <position position="162"/>
    </location>
    <ligand>
        <name>substrate</name>
    </ligand>
</feature>
<feature type="binding site" evidence="1">
    <location>
        <position position="167"/>
    </location>
    <ligand>
        <name>NAD(+)</name>
        <dbReference type="ChEBI" id="CHEBI:57540"/>
    </ligand>
</feature>
<feature type="binding site" evidence="1">
    <location>
        <position position="243"/>
    </location>
    <ligand>
        <name>NAD(+)</name>
        <dbReference type="ChEBI" id="CHEBI:57540"/>
    </ligand>
</feature>
<feature type="binding site" evidence="1">
    <location>
        <position position="257"/>
    </location>
    <ligand>
        <name>GTP</name>
        <dbReference type="ChEBI" id="CHEBI:37565"/>
    </ligand>
</feature>
<feature type="binding site" evidence="1">
    <location>
        <position position="261"/>
    </location>
    <ligand>
        <name>GTP</name>
        <dbReference type="ChEBI" id="CHEBI:37565"/>
    </ligand>
</feature>
<feature type="binding site" evidence="1">
    <location>
        <position position="310"/>
    </location>
    <ligand>
        <name>GTP</name>
        <dbReference type="ChEBI" id="CHEBI:37565"/>
    </ligand>
</feature>
<feature type="binding site" evidence="1">
    <location>
        <position position="313"/>
    </location>
    <ligand>
        <name>GTP</name>
        <dbReference type="ChEBI" id="CHEBI:37565"/>
    </ligand>
</feature>
<feature type="binding site" evidence="1">
    <location>
        <position position="430"/>
    </location>
    <ligand>
        <name>substrate</name>
    </ligand>
</feature>
<feature type="binding site" evidence="1">
    <location>
        <position position="436"/>
    </location>
    <ligand>
        <name>NAD(+)</name>
        <dbReference type="ChEBI" id="CHEBI:57540"/>
    </ligand>
</feature>
<feature type="binding site" evidence="1">
    <location>
        <position position="442"/>
    </location>
    <ligand>
        <name>ADP</name>
        <dbReference type="ChEBI" id="CHEBI:456216"/>
    </ligand>
</feature>
<feature type="binding site" evidence="1">
    <location>
        <position position="521"/>
    </location>
    <ligand>
        <name>ADP</name>
        <dbReference type="ChEBI" id="CHEBI:456216"/>
    </ligand>
</feature>
<feature type="splice variant" id="VSP_001285" description="In isoform C." evidence="5">
    <location>
        <begin position="460"/>
        <end position="472"/>
    </location>
</feature>
<feature type="sequence conflict" description="In Ref. 4; AAN71256." evidence="6" ref="4">
    <location>
        <begin position="6"/>
        <end position="180"/>
    </location>
</feature>
<feature type="sequence conflict" description="In Ref. 1; CAA72173." evidence="6" ref="1">
    <original>GARRQ</original>
    <variation>APAAR</variation>
    <location>
        <begin position="11"/>
        <end position="15"/>
    </location>
</feature>
<accession>P54385</accession>
<accession>P91624</accession>
<accession>Q8IH05</accession>
<accession>Q9VCF7</accession>
<proteinExistence type="evidence at protein level"/>
<reference key="1">
    <citation type="journal article" date="2000" name="J. Neurogenet.">
        <title>The glutamate dehydrogenase gene of Drosophila melanogaster: molecular analysis and expression.</title>
        <authorList>
            <person name="Papadopoulou D."/>
            <person name="Louis C."/>
        </authorList>
    </citation>
    <scope>NUCLEOTIDE SEQUENCE (ISOFORMS A AND C)</scope>
    <scope>TISSUE SPECIFICITY</scope>
    <scope>DEVELOPMENTAL STAGE</scope>
</reference>
<reference key="2">
    <citation type="journal article" date="2000" name="Science">
        <title>The genome sequence of Drosophila melanogaster.</title>
        <authorList>
            <person name="Adams M.D."/>
            <person name="Celniker S.E."/>
            <person name="Holt R.A."/>
            <person name="Evans C.A."/>
            <person name="Gocayne J.D."/>
            <person name="Amanatides P.G."/>
            <person name="Scherer S.E."/>
            <person name="Li P.W."/>
            <person name="Hoskins R.A."/>
            <person name="Galle R.F."/>
            <person name="George R.A."/>
            <person name="Lewis S.E."/>
            <person name="Richards S."/>
            <person name="Ashburner M."/>
            <person name="Henderson S.N."/>
            <person name="Sutton G.G."/>
            <person name="Wortman J.R."/>
            <person name="Yandell M.D."/>
            <person name="Zhang Q."/>
            <person name="Chen L.X."/>
            <person name="Brandon R.C."/>
            <person name="Rogers Y.-H.C."/>
            <person name="Blazej R.G."/>
            <person name="Champe M."/>
            <person name="Pfeiffer B.D."/>
            <person name="Wan K.H."/>
            <person name="Doyle C."/>
            <person name="Baxter E.G."/>
            <person name="Helt G."/>
            <person name="Nelson C.R."/>
            <person name="Miklos G.L.G."/>
            <person name="Abril J.F."/>
            <person name="Agbayani A."/>
            <person name="An H.-J."/>
            <person name="Andrews-Pfannkoch C."/>
            <person name="Baldwin D."/>
            <person name="Ballew R.M."/>
            <person name="Basu A."/>
            <person name="Baxendale J."/>
            <person name="Bayraktaroglu L."/>
            <person name="Beasley E.M."/>
            <person name="Beeson K.Y."/>
            <person name="Benos P.V."/>
            <person name="Berman B.P."/>
            <person name="Bhandari D."/>
            <person name="Bolshakov S."/>
            <person name="Borkova D."/>
            <person name="Botchan M.R."/>
            <person name="Bouck J."/>
            <person name="Brokstein P."/>
            <person name="Brottier P."/>
            <person name="Burtis K.C."/>
            <person name="Busam D.A."/>
            <person name="Butler H."/>
            <person name="Cadieu E."/>
            <person name="Center A."/>
            <person name="Chandra I."/>
            <person name="Cherry J.M."/>
            <person name="Cawley S."/>
            <person name="Dahlke C."/>
            <person name="Davenport L.B."/>
            <person name="Davies P."/>
            <person name="de Pablos B."/>
            <person name="Delcher A."/>
            <person name="Deng Z."/>
            <person name="Mays A.D."/>
            <person name="Dew I."/>
            <person name="Dietz S.M."/>
            <person name="Dodson K."/>
            <person name="Doup L.E."/>
            <person name="Downes M."/>
            <person name="Dugan-Rocha S."/>
            <person name="Dunkov B.C."/>
            <person name="Dunn P."/>
            <person name="Durbin K.J."/>
            <person name="Evangelista C.C."/>
            <person name="Ferraz C."/>
            <person name="Ferriera S."/>
            <person name="Fleischmann W."/>
            <person name="Fosler C."/>
            <person name="Gabrielian A.E."/>
            <person name="Garg N.S."/>
            <person name="Gelbart W.M."/>
            <person name="Glasser K."/>
            <person name="Glodek A."/>
            <person name="Gong F."/>
            <person name="Gorrell J.H."/>
            <person name="Gu Z."/>
            <person name="Guan P."/>
            <person name="Harris M."/>
            <person name="Harris N.L."/>
            <person name="Harvey D.A."/>
            <person name="Heiman T.J."/>
            <person name="Hernandez J.R."/>
            <person name="Houck J."/>
            <person name="Hostin D."/>
            <person name="Houston K.A."/>
            <person name="Howland T.J."/>
            <person name="Wei M.-H."/>
            <person name="Ibegwam C."/>
            <person name="Jalali M."/>
            <person name="Kalush F."/>
            <person name="Karpen G.H."/>
            <person name="Ke Z."/>
            <person name="Kennison J.A."/>
            <person name="Ketchum K.A."/>
            <person name="Kimmel B.E."/>
            <person name="Kodira C.D."/>
            <person name="Kraft C.L."/>
            <person name="Kravitz S."/>
            <person name="Kulp D."/>
            <person name="Lai Z."/>
            <person name="Lasko P."/>
            <person name="Lei Y."/>
            <person name="Levitsky A.A."/>
            <person name="Li J.H."/>
            <person name="Li Z."/>
            <person name="Liang Y."/>
            <person name="Lin X."/>
            <person name="Liu X."/>
            <person name="Mattei B."/>
            <person name="McIntosh T.C."/>
            <person name="McLeod M.P."/>
            <person name="McPherson D."/>
            <person name="Merkulov G."/>
            <person name="Milshina N.V."/>
            <person name="Mobarry C."/>
            <person name="Morris J."/>
            <person name="Moshrefi A."/>
            <person name="Mount S.M."/>
            <person name="Moy M."/>
            <person name="Murphy B."/>
            <person name="Murphy L."/>
            <person name="Muzny D.M."/>
            <person name="Nelson D.L."/>
            <person name="Nelson D.R."/>
            <person name="Nelson K.A."/>
            <person name="Nixon K."/>
            <person name="Nusskern D.R."/>
            <person name="Pacleb J.M."/>
            <person name="Palazzolo M."/>
            <person name="Pittman G.S."/>
            <person name="Pan S."/>
            <person name="Pollard J."/>
            <person name="Puri V."/>
            <person name="Reese M.G."/>
            <person name="Reinert K."/>
            <person name="Remington K."/>
            <person name="Saunders R.D.C."/>
            <person name="Scheeler F."/>
            <person name="Shen H."/>
            <person name="Shue B.C."/>
            <person name="Siden-Kiamos I."/>
            <person name="Simpson M."/>
            <person name="Skupski M.P."/>
            <person name="Smith T.J."/>
            <person name="Spier E."/>
            <person name="Spradling A.C."/>
            <person name="Stapleton M."/>
            <person name="Strong R."/>
            <person name="Sun E."/>
            <person name="Svirskas R."/>
            <person name="Tector C."/>
            <person name="Turner R."/>
            <person name="Venter E."/>
            <person name="Wang A.H."/>
            <person name="Wang X."/>
            <person name="Wang Z.-Y."/>
            <person name="Wassarman D.A."/>
            <person name="Weinstock G.M."/>
            <person name="Weissenbach J."/>
            <person name="Williams S.M."/>
            <person name="Woodage T."/>
            <person name="Worley K.C."/>
            <person name="Wu D."/>
            <person name="Yang S."/>
            <person name="Yao Q.A."/>
            <person name="Ye J."/>
            <person name="Yeh R.-F."/>
            <person name="Zaveri J.S."/>
            <person name="Zhan M."/>
            <person name="Zhang G."/>
            <person name="Zhao Q."/>
            <person name="Zheng L."/>
            <person name="Zheng X.H."/>
            <person name="Zhong F.N."/>
            <person name="Zhong W."/>
            <person name="Zhou X."/>
            <person name="Zhu S.C."/>
            <person name="Zhu X."/>
            <person name="Smith H.O."/>
            <person name="Gibbs R.A."/>
            <person name="Myers E.W."/>
            <person name="Rubin G.M."/>
            <person name="Venter J.C."/>
        </authorList>
    </citation>
    <scope>NUCLEOTIDE SEQUENCE [LARGE SCALE GENOMIC DNA]</scope>
    <source>
        <strain>Berkeley</strain>
    </source>
</reference>
<reference key="3">
    <citation type="journal article" date="2002" name="Genome Biol.">
        <title>Annotation of the Drosophila melanogaster euchromatic genome: a systematic review.</title>
        <authorList>
            <person name="Misra S."/>
            <person name="Crosby M.A."/>
            <person name="Mungall C.J."/>
            <person name="Matthews B.B."/>
            <person name="Campbell K.S."/>
            <person name="Hradecky P."/>
            <person name="Huang Y."/>
            <person name="Kaminker J.S."/>
            <person name="Millburn G.H."/>
            <person name="Prochnik S.E."/>
            <person name="Smith C.D."/>
            <person name="Tupy J.L."/>
            <person name="Whitfield E.J."/>
            <person name="Bayraktaroglu L."/>
            <person name="Berman B.P."/>
            <person name="Bettencourt B.R."/>
            <person name="Celniker S.E."/>
            <person name="de Grey A.D.N.J."/>
            <person name="Drysdale R.A."/>
            <person name="Harris N.L."/>
            <person name="Richter J."/>
            <person name="Russo S."/>
            <person name="Schroeder A.J."/>
            <person name="Shu S.Q."/>
            <person name="Stapleton M."/>
            <person name="Yamada C."/>
            <person name="Ashburner M."/>
            <person name="Gelbart W.M."/>
            <person name="Rubin G.M."/>
            <person name="Lewis S.E."/>
        </authorList>
    </citation>
    <scope>GENOME REANNOTATION</scope>
    <scope>ALTERNATIVE SPLICING</scope>
    <source>
        <strain>Berkeley</strain>
    </source>
</reference>
<reference key="4">
    <citation type="journal article" date="2002" name="Genome Biol.">
        <title>A Drosophila full-length cDNA resource.</title>
        <authorList>
            <person name="Stapleton M."/>
            <person name="Carlson J.W."/>
            <person name="Brokstein P."/>
            <person name="Yu C."/>
            <person name="Champe M."/>
            <person name="George R.A."/>
            <person name="Guarin H."/>
            <person name="Kronmiller B."/>
            <person name="Pacleb J.M."/>
            <person name="Park S."/>
            <person name="Wan K.H."/>
            <person name="Rubin G.M."/>
            <person name="Celniker S.E."/>
        </authorList>
    </citation>
    <scope>NUCLEOTIDE SEQUENCE [LARGE SCALE MRNA] (ISOFORMS A AND C)</scope>
    <source>
        <strain>Berkeley</strain>
        <tissue>Embryo</tissue>
    </source>
</reference>
<reference key="5">
    <citation type="journal article" date="1982" name="Biochem. Genet.">
        <title>Purification and genetic control of NAD-dependent glutamate dehydrogenase from Drosophila melanogaster.</title>
        <authorList>
            <person name="Caggese C."/>
            <person name="De Pinto V."/>
            <person name="Ferrandino A."/>
        </authorList>
    </citation>
    <scope>CHARACTERIZATION</scope>
</reference>
<name>DHE3_DROME</name>
<evidence type="ECO:0000250" key="1"/>
<evidence type="ECO:0000255" key="2"/>
<evidence type="ECO:0000255" key="3">
    <source>
        <dbReference type="PROSITE-ProRule" id="PRU10011"/>
    </source>
</evidence>
<evidence type="ECO:0000269" key="4">
    <source>
    </source>
</evidence>
<evidence type="ECO:0000303" key="5">
    <source>
    </source>
</evidence>
<evidence type="ECO:0000305" key="6"/>
<comment type="catalytic activity">
    <reaction evidence="3">
        <text>L-glutamate + NAD(+) + H2O = 2-oxoglutarate + NH4(+) + NADH + H(+)</text>
        <dbReference type="Rhea" id="RHEA:15133"/>
        <dbReference type="ChEBI" id="CHEBI:15377"/>
        <dbReference type="ChEBI" id="CHEBI:15378"/>
        <dbReference type="ChEBI" id="CHEBI:16810"/>
        <dbReference type="ChEBI" id="CHEBI:28938"/>
        <dbReference type="ChEBI" id="CHEBI:29985"/>
        <dbReference type="ChEBI" id="CHEBI:57540"/>
        <dbReference type="ChEBI" id="CHEBI:57945"/>
        <dbReference type="EC" id="1.4.1.3"/>
    </reaction>
</comment>
<comment type="catalytic activity">
    <reaction evidence="3">
        <text>L-glutamate + NADP(+) + H2O = 2-oxoglutarate + NH4(+) + NADPH + H(+)</text>
        <dbReference type="Rhea" id="RHEA:11612"/>
        <dbReference type="ChEBI" id="CHEBI:15377"/>
        <dbReference type="ChEBI" id="CHEBI:15378"/>
        <dbReference type="ChEBI" id="CHEBI:16810"/>
        <dbReference type="ChEBI" id="CHEBI:28938"/>
        <dbReference type="ChEBI" id="CHEBI:29985"/>
        <dbReference type="ChEBI" id="CHEBI:57783"/>
        <dbReference type="ChEBI" id="CHEBI:58349"/>
        <dbReference type="EC" id="1.4.1.3"/>
    </reaction>
</comment>
<comment type="activity regulation">
    <text evidence="1">Subject to allosteric regulation. Activated by ADP. Inhibited by GTP and ATP (By similarity).</text>
</comment>
<comment type="subunit">
    <text>Homohexamer.</text>
</comment>
<comment type="subcellular location">
    <subcellularLocation>
        <location evidence="1">Mitochondrion matrix</location>
    </subcellularLocation>
</comment>
<comment type="alternative products">
    <event type="alternative splicing"/>
    <isoform>
        <id>P54385-1</id>
        <name>A</name>
        <name>Long</name>
        <sequence type="displayed"/>
    </isoform>
    <isoform>
        <id>P54385-2</id>
        <name>C</name>
        <name>Short</name>
        <name>F</name>
        <sequence type="described" ref="VSP_001285"/>
    </isoform>
</comment>
<comment type="tissue specificity">
    <text evidence="4">Expressed throughout the embryo during early stages before becoming localized in mesodermal tissue by stage 8. At stage 12 expression is concentrated in the posterior midgut. After stage 13 expression it is found in the anterior and posterior midgut, the hindgut, fat body, muscle, and central nervous system. In 3rd instar larvae expression is found in the leg disks, the wing pouch of the wing disk, the eye-antenna disk, and the developing brain medulla.</text>
</comment>
<comment type="developmental stage">
    <text evidence="4">Expressed at all stages.</text>
</comment>
<comment type="miscellaneous">
    <text evidence="1">ADP can occupy the NADH binding site and activate the enzyme.</text>
</comment>
<comment type="similarity">
    <text evidence="6">Belongs to the Glu/Leu/Phe/Val dehydrogenases family.</text>
</comment>
<comment type="sequence caution" evidence="6">
    <conflict type="erroneous initiation">
        <sequence resource="EMBL-CDS" id="AAN71256"/>
    </conflict>
</comment>
<sequence>MYHLKSLARQGARRQQELATLAKALPTAVMQSSRGYATEHQIPDRLKDVPTAKDPRFFDMVEYFFHRGCQIAEESLVDDMKGKLTRDEKKQKVKGILMLMQPCDHIIEIAFPLRRDAGNYEMITGYRAQHSTHKTPTKGGIRFSLDVSRDEVKALSALMTFKCACVDVPFGGAKAGLKINPKEYSEHELEKITRRFTLELAKKGFIGPGVDVPAPDMGTGEREMSWIADTYAKTIGHLDINAHACVTGKPINQGGIHGRVSATGRGVFHGLENFINEANYMSQIGTTPGWGGKTFIVQGFGNVGLHTTRYLTRAGATCIGVIEHDGTLYNPEGIDPKLLEDYKNEHGTIVGYQNAKPYEGENLMFEKCDIFIPAAVEKVITSENANRIQAKIIAEAANGPTTPAADKILIDRNILVIPDLYINAGGVTVSFFEWLKNLNHVSYGRLTFKYERESNYHLLASVQQSIERIINDESVQESLERRFGRVGGRIPVTPSESFQKRISGASEKDIVHSGLDYTMERSARAIMKTAMKYNLGLDLRTAAYVNSIEKIFTTYRDAGLAF</sequence>
<organism>
    <name type="scientific">Drosophila melanogaster</name>
    <name type="common">Fruit fly</name>
    <dbReference type="NCBI Taxonomy" id="7227"/>
    <lineage>
        <taxon>Eukaryota</taxon>
        <taxon>Metazoa</taxon>
        <taxon>Ecdysozoa</taxon>
        <taxon>Arthropoda</taxon>
        <taxon>Hexapoda</taxon>
        <taxon>Insecta</taxon>
        <taxon>Pterygota</taxon>
        <taxon>Neoptera</taxon>
        <taxon>Endopterygota</taxon>
        <taxon>Diptera</taxon>
        <taxon>Brachycera</taxon>
        <taxon>Muscomorpha</taxon>
        <taxon>Ephydroidea</taxon>
        <taxon>Drosophilidae</taxon>
        <taxon>Drosophila</taxon>
        <taxon>Sophophora</taxon>
    </lineage>
</organism>
<dbReference type="EC" id="1.4.1.3"/>
<dbReference type="EMBL" id="Y11314">
    <property type="protein sequence ID" value="CAA72173.1"/>
    <property type="molecule type" value="mRNA"/>
</dbReference>
<dbReference type="EMBL" id="Z29062">
    <property type="protein sequence ID" value="CAA82304.1"/>
    <property type="molecule type" value="mRNA"/>
</dbReference>
<dbReference type="EMBL" id="AE014297">
    <property type="protein sequence ID" value="AAF56209.5"/>
    <property type="molecule type" value="Genomic_DNA"/>
</dbReference>
<dbReference type="EMBL" id="AE014297">
    <property type="protein sequence ID" value="AAS65200.1"/>
    <property type="molecule type" value="Genomic_DNA"/>
</dbReference>
<dbReference type="EMBL" id="AY061323">
    <property type="protein sequence ID" value="AAL28871.1"/>
    <property type="molecule type" value="mRNA"/>
</dbReference>
<dbReference type="EMBL" id="BT001501">
    <property type="protein sequence ID" value="AAN71256.1"/>
    <property type="status" value="ALT_INIT"/>
    <property type="molecule type" value="mRNA"/>
</dbReference>
<dbReference type="PIR" id="S42919">
    <property type="entry name" value="S42919"/>
</dbReference>
<dbReference type="RefSeq" id="NP_524470.4">
    <molecule id="P54385-1"/>
    <property type="nucleotide sequence ID" value="NM_079746.6"/>
</dbReference>
<dbReference type="RefSeq" id="NP_996274.1">
    <molecule id="P54385-2"/>
    <property type="nucleotide sequence ID" value="NM_206551.3"/>
</dbReference>
<dbReference type="SMR" id="P54385"/>
<dbReference type="BioGRID" id="67768">
    <property type="interactions" value="28"/>
</dbReference>
<dbReference type="FunCoup" id="P54385">
    <property type="interactions" value="1352"/>
</dbReference>
<dbReference type="IntAct" id="P54385">
    <property type="interactions" value="51"/>
</dbReference>
<dbReference type="STRING" id="7227.FBpp0088988"/>
<dbReference type="GlyGen" id="P54385">
    <property type="glycosylation" value="3 sites"/>
</dbReference>
<dbReference type="PaxDb" id="7227-FBpp0088988"/>
<dbReference type="DNASU" id="42832"/>
<dbReference type="EnsemblMetazoa" id="FBtr0089497">
    <molecule id="P54385-2"/>
    <property type="protein sequence ID" value="FBpp0088990"/>
    <property type="gene ID" value="FBgn0001098"/>
</dbReference>
<dbReference type="EnsemblMetazoa" id="FBtr0089498">
    <molecule id="P54385-1"/>
    <property type="protein sequence ID" value="FBpp0088988"/>
    <property type="gene ID" value="FBgn0001098"/>
</dbReference>
<dbReference type="GeneID" id="42832"/>
<dbReference type="KEGG" id="dme:Dmel_CG5320"/>
<dbReference type="AGR" id="FB:FBgn0001098"/>
<dbReference type="CTD" id="42832"/>
<dbReference type="FlyBase" id="FBgn0001098">
    <property type="gene designation" value="Gdh"/>
</dbReference>
<dbReference type="VEuPathDB" id="VectorBase:FBgn0001098"/>
<dbReference type="eggNOG" id="KOG2250">
    <property type="taxonomic scope" value="Eukaryota"/>
</dbReference>
<dbReference type="GeneTree" id="ENSGT00390000000854"/>
<dbReference type="InParanoid" id="P54385"/>
<dbReference type="OMA" id="MIMGWMM"/>
<dbReference type="OrthoDB" id="6718861at2759"/>
<dbReference type="PhylomeDB" id="P54385"/>
<dbReference type="Reactome" id="R-DME-2151201">
    <property type="pathway name" value="Transcriptional activation of mitochondrial biogenesis"/>
</dbReference>
<dbReference type="Reactome" id="R-DME-8964539">
    <property type="pathway name" value="Glutamate and glutamine metabolism"/>
</dbReference>
<dbReference type="Reactome" id="R-DME-9837999">
    <property type="pathway name" value="Mitochondrial protein degradation"/>
</dbReference>
<dbReference type="BioGRID-ORCS" id="42832">
    <property type="hits" value="0 hits in 3 CRISPR screens"/>
</dbReference>
<dbReference type="ChiTaRS" id="Gdh">
    <property type="organism name" value="fly"/>
</dbReference>
<dbReference type="GenomeRNAi" id="42832"/>
<dbReference type="PRO" id="PR:P54385"/>
<dbReference type="Proteomes" id="UP000000803">
    <property type="component" value="Chromosome 3R"/>
</dbReference>
<dbReference type="Bgee" id="FBgn0001098">
    <property type="expression patterns" value="Expressed in adult hindgut (Drosophila) and 282 other cell types or tissues"/>
</dbReference>
<dbReference type="ExpressionAtlas" id="P54385">
    <property type="expression patterns" value="baseline and differential"/>
</dbReference>
<dbReference type="GO" id="GO:0005737">
    <property type="term" value="C:cytoplasm"/>
    <property type="evidence" value="ECO:0000314"/>
    <property type="project" value="FlyBase"/>
</dbReference>
<dbReference type="GO" id="GO:0005829">
    <property type="term" value="C:cytosol"/>
    <property type="evidence" value="ECO:0007005"/>
    <property type="project" value="FlyBase"/>
</dbReference>
<dbReference type="GO" id="GO:0005759">
    <property type="term" value="C:mitochondrial matrix"/>
    <property type="evidence" value="ECO:0000353"/>
    <property type="project" value="FlyBase"/>
</dbReference>
<dbReference type="GO" id="GO:0005739">
    <property type="term" value="C:mitochondrion"/>
    <property type="evidence" value="ECO:0000314"/>
    <property type="project" value="FlyBase"/>
</dbReference>
<dbReference type="GO" id="GO:0005524">
    <property type="term" value="F:ATP binding"/>
    <property type="evidence" value="ECO:0007669"/>
    <property type="project" value="UniProtKB-KW"/>
</dbReference>
<dbReference type="GO" id="GO:0004352">
    <property type="term" value="F:glutamate dehydrogenase (NAD+) activity"/>
    <property type="evidence" value="ECO:0000314"/>
    <property type="project" value="FlyBase"/>
</dbReference>
<dbReference type="GO" id="GO:0004354">
    <property type="term" value="F:glutamate dehydrogenase (NADP+) activity"/>
    <property type="evidence" value="ECO:0000314"/>
    <property type="project" value="FlyBase"/>
</dbReference>
<dbReference type="GO" id="GO:0005525">
    <property type="term" value="F:GTP binding"/>
    <property type="evidence" value="ECO:0007669"/>
    <property type="project" value="UniProtKB-KW"/>
</dbReference>
<dbReference type="GO" id="GO:0042802">
    <property type="term" value="F:identical protein binding"/>
    <property type="evidence" value="ECO:0000314"/>
    <property type="project" value="FlyBase"/>
</dbReference>
<dbReference type="GO" id="GO:0006538">
    <property type="term" value="P:glutamate catabolic process"/>
    <property type="evidence" value="ECO:0000318"/>
    <property type="project" value="GO_Central"/>
</dbReference>
<dbReference type="GO" id="GO:0006536">
    <property type="term" value="P:glutamate metabolic process"/>
    <property type="evidence" value="ECO:0000314"/>
    <property type="project" value="FlyBase"/>
</dbReference>
<dbReference type="CDD" id="cd01076">
    <property type="entry name" value="NAD_bind_1_Glu_DH"/>
    <property type="match status" value="1"/>
</dbReference>
<dbReference type="FunFam" id="3.40.50.10860:FF:000007">
    <property type="entry name" value="Glutamate dehydrogenase 1, mitochondrial"/>
    <property type="match status" value="1"/>
</dbReference>
<dbReference type="FunFam" id="3.40.50.720:FF:000100">
    <property type="entry name" value="Glutamate dehydrogenase 1, mitochondrial"/>
    <property type="match status" value="1"/>
</dbReference>
<dbReference type="Gene3D" id="1.10.287.140">
    <property type="match status" value="1"/>
</dbReference>
<dbReference type="Gene3D" id="3.40.50.10860">
    <property type="entry name" value="Leucine Dehydrogenase, chain A, domain 1"/>
    <property type="match status" value="1"/>
</dbReference>
<dbReference type="Gene3D" id="3.40.50.720">
    <property type="entry name" value="NAD(P)-binding Rossmann-like Domain"/>
    <property type="match status" value="1"/>
</dbReference>
<dbReference type="InterPro" id="IPR046346">
    <property type="entry name" value="Aminoacid_DH-like_N_sf"/>
</dbReference>
<dbReference type="InterPro" id="IPR006095">
    <property type="entry name" value="Glu/Leu/Phe/Val/Trp_DH"/>
</dbReference>
<dbReference type="InterPro" id="IPR006096">
    <property type="entry name" value="Glu/Leu/Phe/Val/Trp_DH_C"/>
</dbReference>
<dbReference type="InterPro" id="IPR006097">
    <property type="entry name" value="Glu/Leu/Phe/Val/Trp_DH_dimer"/>
</dbReference>
<dbReference type="InterPro" id="IPR033524">
    <property type="entry name" value="Glu/Leu/Phe/Val_DH_AS"/>
</dbReference>
<dbReference type="InterPro" id="IPR036291">
    <property type="entry name" value="NAD(P)-bd_dom_sf"/>
</dbReference>
<dbReference type="InterPro" id="IPR033922">
    <property type="entry name" value="NAD_bind_Glu_DH"/>
</dbReference>
<dbReference type="PANTHER" id="PTHR11606">
    <property type="entry name" value="GLUTAMATE DEHYDROGENASE"/>
    <property type="match status" value="1"/>
</dbReference>
<dbReference type="PANTHER" id="PTHR11606:SF13">
    <property type="entry name" value="GLUTAMATE DEHYDROGENASE 1, MITOCHONDRIAL"/>
    <property type="match status" value="1"/>
</dbReference>
<dbReference type="Pfam" id="PF00208">
    <property type="entry name" value="ELFV_dehydrog"/>
    <property type="match status" value="1"/>
</dbReference>
<dbReference type="Pfam" id="PF02812">
    <property type="entry name" value="ELFV_dehydrog_N"/>
    <property type="match status" value="1"/>
</dbReference>
<dbReference type="PRINTS" id="PR00082">
    <property type="entry name" value="GLFDHDRGNASE"/>
</dbReference>
<dbReference type="SMART" id="SM00839">
    <property type="entry name" value="ELFV_dehydrog"/>
    <property type="match status" value="1"/>
</dbReference>
<dbReference type="SUPFAM" id="SSF53223">
    <property type="entry name" value="Aminoacid dehydrogenase-like, N-terminal domain"/>
    <property type="match status" value="1"/>
</dbReference>
<dbReference type="SUPFAM" id="SSF51735">
    <property type="entry name" value="NAD(P)-binding Rossmann-fold domains"/>
    <property type="match status" value="1"/>
</dbReference>
<dbReference type="PROSITE" id="PS00074">
    <property type="entry name" value="GLFV_DEHYDROGENASE"/>
    <property type="match status" value="1"/>
</dbReference>
<keyword id="KW-0025">Alternative splicing</keyword>
<keyword id="KW-0067">ATP-binding</keyword>
<keyword id="KW-0342">GTP-binding</keyword>
<keyword id="KW-0496">Mitochondrion</keyword>
<keyword id="KW-0520">NAD</keyword>
<keyword id="KW-0547">Nucleotide-binding</keyword>
<keyword id="KW-0560">Oxidoreductase</keyword>
<keyword id="KW-1185">Reference proteome</keyword>
<keyword id="KW-0809">Transit peptide</keyword>
<protein>
    <recommendedName>
        <fullName>Glutamate dehydrogenase, mitochondrial</fullName>
        <shortName>GDH</shortName>
        <ecNumber>1.4.1.3</ecNumber>
    </recommendedName>
</protein>
<gene>
    <name type="primary">Gdh</name>
    <name type="synonym">Glud</name>
    <name type="ORF">CG5320</name>
</gene>